<proteinExistence type="inferred from homology"/>
<reference key="1">
    <citation type="submission" date="2000-03" db="EMBL/GenBank/DDBJ databases">
        <title>S.griseus rbsC, rbsA, glk, secreted protein, p52(p3), uk, erg6 homologues.</title>
        <authorList>
            <person name="Watanabe M."/>
            <person name="Kawamoto S."/>
            <person name="Ochi K."/>
        </authorList>
    </citation>
    <scope>NUCLEOTIDE SEQUENCE [GENOMIC DNA]</scope>
    <source>
        <strain>13189</strain>
    </source>
</reference>
<accession>Q9F1V8</accession>
<protein>
    <recommendedName>
        <fullName>2-methylisoborneol synthase</fullName>
        <shortName>2-MIB synthase</shortName>
        <ecNumber>4.2.3.118</ecNumber>
    </recommendedName>
</protein>
<sequence>MPVPELPPPRSSLPEAVTRFGASVLGAVAARAHDSEATVGGPSGGRPLPSPPAGLSFGPPSPAAPPTDVPAPEAPGWGADLERLLCGPHGLGTAGLRLTPGKERPVPATAREGRPIPGLYHHPVPEPDEARVEEVSRRIKAWALDEVSLYPEEWEEQFDGFSVGRYMVGCHPDAPTVDHLMLATRLMVAENAVDDCYCEDHGGSPVGLGERLLLAHTALDPLYTAREYQPGWAASLHADAPRRAYRSAMDYFVRAAGPSQADRLRHDMARLHLGYLAEAAWAQQDQVPEVWEYLAMRQFNNFRPCPTITDTVGGYELPADLHAQAAMQKVIALASNATTIVNDLYSYTKELAAPGRHLNLPVVIAEREGLSDQDAYLKSVEIHNELMHAFESEAAALAAACPVPSVQRFLRGVAAWVDGNHHWHRSNTYRYSLPDFW</sequence>
<evidence type="ECO:0000250" key="1"/>
<evidence type="ECO:0000256" key="2">
    <source>
        <dbReference type="SAM" id="MobiDB-lite"/>
    </source>
</evidence>
<evidence type="ECO:0000305" key="3"/>
<keyword id="KW-0456">Lyase</keyword>
<keyword id="KW-0460">Magnesium</keyword>
<keyword id="KW-0479">Metal-binding</keyword>
<comment type="function">
    <text evidence="1">Catalyzes the cyclization of 2-methylgeranyl diphosphate (2-MeGPP) to 2-methylisoborneol (2-MIB), which likely involves the intermediacy of 2-methyllinalyl diphosphate.</text>
</comment>
<comment type="catalytic activity">
    <reaction>
        <text>(E)-2-methylgeranyl diphosphate + H2O = 2-methylisoborneol + diphosphate</text>
        <dbReference type="Rhea" id="RHEA:32571"/>
        <dbReference type="ChEBI" id="CHEBI:15377"/>
        <dbReference type="ChEBI" id="CHEBI:33019"/>
        <dbReference type="ChEBI" id="CHEBI:61984"/>
        <dbReference type="ChEBI" id="CHEBI:61987"/>
        <dbReference type="EC" id="4.2.3.118"/>
    </reaction>
</comment>
<comment type="cofactor">
    <cofactor evidence="1">
        <name>Mg(2+)</name>
        <dbReference type="ChEBI" id="CHEBI:18420"/>
    </cofactor>
</comment>
<comment type="miscellaneous">
    <text>2-MIB is a volatile organic compound that has an unusually low odor threshold. Together with geosmin, methylisoborneol is responsible for the characteristic smell of moist soil as well as unpleasant taste and odor episodes associated with public water supplies and contamination of various foodstuffs, including fish, wine, and beer.</text>
</comment>
<comment type="similarity">
    <text evidence="3">Belongs to the terpene synthase family. 2-methylisoborneol synthase subfamily.</text>
</comment>
<dbReference type="EC" id="4.2.3.118"/>
<dbReference type="EMBL" id="AB040071">
    <property type="protein sequence ID" value="BAB20507.1"/>
    <property type="molecule type" value="Genomic_DNA"/>
</dbReference>
<dbReference type="RefSeq" id="WP_030703894.1">
    <property type="nucleotide sequence ID" value="NZ_JBIVRA010000011.1"/>
</dbReference>
<dbReference type="SMR" id="Q9F1V8"/>
<dbReference type="STRING" id="1911.GCA_001715295_05440"/>
<dbReference type="BRENDA" id="4.2.3.118">
    <property type="organism ID" value="12251"/>
</dbReference>
<dbReference type="GO" id="GO:0046872">
    <property type="term" value="F:metal ion binding"/>
    <property type="evidence" value="ECO:0007669"/>
    <property type="project" value="UniProtKB-KW"/>
</dbReference>
<dbReference type="GO" id="GO:0010333">
    <property type="term" value="F:terpene synthase activity"/>
    <property type="evidence" value="ECO:0000250"/>
    <property type="project" value="UniProtKB"/>
</dbReference>
<dbReference type="GO" id="GO:0042214">
    <property type="term" value="P:terpene metabolic process"/>
    <property type="evidence" value="ECO:0000250"/>
    <property type="project" value="UniProtKB"/>
</dbReference>
<dbReference type="FunFam" id="1.10.600.10:FF:000019">
    <property type="entry name" value="2-methylisoborneol synthase"/>
    <property type="match status" value="1"/>
</dbReference>
<dbReference type="Gene3D" id="1.10.600.10">
    <property type="entry name" value="Farnesyl Diphosphate Synthase"/>
    <property type="match status" value="1"/>
</dbReference>
<dbReference type="InterPro" id="IPR008949">
    <property type="entry name" value="Isoprenoid_synthase_dom_sf"/>
</dbReference>
<dbReference type="InterPro" id="IPR047945">
    <property type="entry name" value="MIB_synthase"/>
</dbReference>
<dbReference type="InterPro" id="IPR034686">
    <property type="entry name" value="Terpene_cyclase-like_2"/>
</dbReference>
<dbReference type="NCBIfam" id="NF041167">
    <property type="entry name" value="f2_encap_cargo2"/>
    <property type="match status" value="1"/>
</dbReference>
<dbReference type="PANTHER" id="PTHR35201:SF4">
    <property type="entry name" value="BETA-PINACENE SYNTHASE-RELATED"/>
    <property type="match status" value="1"/>
</dbReference>
<dbReference type="PANTHER" id="PTHR35201">
    <property type="entry name" value="TERPENE SYNTHASE"/>
    <property type="match status" value="1"/>
</dbReference>
<dbReference type="Pfam" id="PF19086">
    <property type="entry name" value="Terpene_syn_C_2"/>
    <property type="match status" value="1"/>
</dbReference>
<dbReference type="SFLD" id="SFLDS00005">
    <property type="entry name" value="Isoprenoid_Synthase_Type_I"/>
    <property type="match status" value="1"/>
</dbReference>
<dbReference type="SFLD" id="SFLDG01020">
    <property type="entry name" value="Terpene_Cyclase_Like_2"/>
    <property type="match status" value="1"/>
</dbReference>
<dbReference type="SUPFAM" id="SSF48576">
    <property type="entry name" value="Terpenoid synthases"/>
    <property type="match status" value="1"/>
</dbReference>
<name>MIBS_STRGR</name>
<feature type="chain" id="PRO_0000205355" description="2-methylisoborneol synthase">
    <location>
        <begin position="1"/>
        <end position="437"/>
    </location>
</feature>
<feature type="region of interest" description="Disordered" evidence="2">
    <location>
        <begin position="32"/>
        <end position="125"/>
    </location>
</feature>
<feature type="compositionally biased region" description="Pro residues" evidence="2">
    <location>
        <begin position="59"/>
        <end position="73"/>
    </location>
</feature>
<feature type="binding site" evidence="1">
    <location>
        <position position="194"/>
    </location>
    <ligand>
        <name>Mg(2+)</name>
        <dbReference type="ChEBI" id="CHEBI:18420"/>
    </ligand>
</feature>
<feature type="binding site" evidence="1">
    <location>
        <position position="195"/>
    </location>
    <ligand>
        <name>Mg(2+)</name>
        <dbReference type="ChEBI" id="CHEBI:18420"/>
    </ligand>
</feature>
<feature type="binding site" evidence="1">
    <location>
        <position position="199"/>
    </location>
    <ligand>
        <name>Mg(2+)</name>
        <dbReference type="ChEBI" id="CHEBI:18420"/>
    </ligand>
</feature>
<feature type="binding site" evidence="1">
    <location>
        <position position="342"/>
    </location>
    <ligand>
        <name>Mg(2+)</name>
        <dbReference type="ChEBI" id="CHEBI:18420"/>
    </ligand>
</feature>
<feature type="binding site" evidence="1">
    <location>
        <position position="346"/>
    </location>
    <ligand>
        <name>Mg(2+)</name>
        <dbReference type="ChEBI" id="CHEBI:18420"/>
    </ligand>
</feature>
<feature type="binding site" evidence="1">
    <location>
        <position position="350"/>
    </location>
    <ligand>
        <name>Mg(2+)</name>
        <dbReference type="ChEBI" id="CHEBI:18420"/>
    </ligand>
</feature>
<organism>
    <name type="scientific">Streptomyces griseus</name>
    <dbReference type="NCBI Taxonomy" id="1911"/>
    <lineage>
        <taxon>Bacteria</taxon>
        <taxon>Bacillati</taxon>
        <taxon>Actinomycetota</taxon>
        <taxon>Actinomycetes</taxon>
        <taxon>Kitasatosporales</taxon>
        <taxon>Streptomycetaceae</taxon>
        <taxon>Streptomyces</taxon>
    </lineage>
</organism>